<organism>
    <name type="scientific">Homo sapiens</name>
    <name type="common">Human</name>
    <dbReference type="NCBI Taxonomy" id="9606"/>
    <lineage>
        <taxon>Eukaryota</taxon>
        <taxon>Metazoa</taxon>
        <taxon>Chordata</taxon>
        <taxon>Craniata</taxon>
        <taxon>Vertebrata</taxon>
        <taxon>Euteleostomi</taxon>
        <taxon>Mammalia</taxon>
        <taxon>Eutheria</taxon>
        <taxon>Euarchontoglires</taxon>
        <taxon>Primates</taxon>
        <taxon>Haplorrhini</taxon>
        <taxon>Catarrhini</taxon>
        <taxon>Hominidae</taxon>
        <taxon>Homo</taxon>
    </lineage>
</organism>
<sequence length="576" mass="67217">MDDLKYGVYPLKEASGCPGAERNLLVYSYFEKETLTFRDVAIEFSLEEWECLNPAQQNLYMNVMLENYKNLVFLGVAVSKQDPVTCLEQEKEPWNMKRHEMVDEPPAMCSYFTKDLWPEQDIKDSFQQVILRRYGKCEHENLQLRKGSASVDEYKVHKEGYNELNQCLTTTQSKIFPCDKYVKVFHKFLNANRHKTRHTGKKPFKCKKCGKSFCMLLHLSQHKRIHIRENSYQCEECGKAFKWFSTLTRHKRIHTGEKPFKCEECGKAFKQSSTLTTHKIIHTGEKPYRCEECGKAFNRSSHLTTHKIIHTGEKPYKCEECGKAFNQSSTLSTHKFIHAGEKPYKCEECDKAFNRFSYLTKHKIIHTGEKSYKCEECGKGFNWSSTLTKHKRIHTGEKPYKCEVCGKAFNESSNLTTHKMIHTGEKPYKCEECGKAFNRSPQLTAHKIIHTGEKPYKCEECGKAFSQSSILTTHKRIHTGEKPYKCEECGKAFNRSSNLTKHKIIHTGEKSYKCEECGKAFNQSSTLTKHRKIHTRQKPYNCEECDNTFNQSSNLIKQNNSYWRETLQMSRMWESL</sequence>
<keyword id="KW-0221">Differentiation</keyword>
<keyword id="KW-0238">DNA-binding</keyword>
<keyword id="KW-0479">Metal-binding</keyword>
<keyword id="KW-0539">Nucleus</keyword>
<keyword id="KW-1267">Proteomics identification</keyword>
<keyword id="KW-1185">Reference proteome</keyword>
<keyword id="KW-0677">Repeat</keyword>
<keyword id="KW-0678">Repressor</keyword>
<keyword id="KW-0804">Transcription</keyword>
<keyword id="KW-0805">Transcription regulation</keyword>
<keyword id="KW-0862">Zinc</keyword>
<keyword id="KW-0863">Zinc-finger</keyword>
<reference key="1">
    <citation type="journal article" date="2001" name="DNA Res.">
        <title>Prediction of the coding sequences of unidentified human genes. XXII. The complete sequences of 50 new cDNA clones which code for large proteins.</title>
        <authorList>
            <person name="Nagase T."/>
            <person name="Kikuno R."/>
            <person name="Ohara O."/>
        </authorList>
    </citation>
    <scope>NUCLEOTIDE SEQUENCE [LARGE SCALE MRNA]</scope>
    <source>
        <tissue>Brain</tissue>
    </source>
</reference>
<reference key="2">
    <citation type="journal article" date="2004" name="Nat. Genet.">
        <title>Complete sequencing and characterization of 21,243 full-length human cDNAs.</title>
        <authorList>
            <person name="Ota T."/>
            <person name="Suzuki Y."/>
            <person name="Nishikawa T."/>
            <person name="Otsuki T."/>
            <person name="Sugiyama T."/>
            <person name="Irie R."/>
            <person name="Wakamatsu A."/>
            <person name="Hayashi K."/>
            <person name="Sato H."/>
            <person name="Nagai K."/>
            <person name="Kimura K."/>
            <person name="Makita H."/>
            <person name="Sekine M."/>
            <person name="Obayashi M."/>
            <person name="Nishi T."/>
            <person name="Shibahara T."/>
            <person name="Tanaka T."/>
            <person name="Ishii S."/>
            <person name="Yamamoto J."/>
            <person name="Saito K."/>
            <person name="Kawai Y."/>
            <person name="Isono Y."/>
            <person name="Nakamura Y."/>
            <person name="Nagahari K."/>
            <person name="Murakami K."/>
            <person name="Yasuda T."/>
            <person name="Iwayanagi T."/>
            <person name="Wagatsuma M."/>
            <person name="Shiratori A."/>
            <person name="Sudo H."/>
            <person name="Hosoiri T."/>
            <person name="Kaku Y."/>
            <person name="Kodaira H."/>
            <person name="Kondo H."/>
            <person name="Sugawara M."/>
            <person name="Takahashi M."/>
            <person name="Kanda K."/>
            <person name="Yokoi T."/>
            <person name="Furuya T."/>
            <person name="Kikkawa E."/>
            <person name="Omura Y."/>
            <person name="Abe K."/>
            <person name="Kamihara K."/>
            <person name="Katsuta N."/>
            <person name="Sato K."/>
            <person name="Tanikawa M."/>
            <person name="Yamazaki M."/>
            <person name="Ninomiya K."/>
            <person name="Ishibashi T."/>
            <person name="Yamashita H."/>
            <person name="Murakawa K."/>
            <person name="Fujimori K."/>
            <person name="Tanai H."/>
            <person name="Kimata M."/>
            <person name="Watanabe M."/>
            <person name="Hiraoka S."/>
            <person name="Chiba Y."/>
            <person name="Ishida S."/>
            <person name="Ono Y."/>
            <person name="Takiguchi S."/>
            <person name="Watanabe S."/>
            <person name="Yosida M."/>
            <person name="Hotuta T."/>
            <person name="Kusano J."/>
            <person name="Kanehori K."/>
            <person name="Takahashi-Fujii A."/>
            <person name="Hara H."/>
            <person name="Tanase T.-O."/>
            <person name="Nomura Y."/>
            <person name="Togiya S."/>
            <person name="Komai F."/>
            <person name="Hara R."/>
            <person name="Takeuchi K."/>
            <person name="Arita M."/>
            <person name="Imose N."/>
            <person name="Musashino K."/>
            <person name="Yuuki H."/>
            <person name="Oshima A."/>
            <person name="Sasaki N."/>
            <person name="Aotsuka S."/>
            <person name="Yoshikawa Y."/>
            <person name="Matsunawa H."/>
            <person name="Ichihara T."/>
            <person name="Shiohata N."/>
            <person name="Sano S."/>
            <person name="Moriya S."/>
            <person name="Momiyama H."/>
            <person name="Satoh N."/>
            <person name="Takami S."/>
            <person name="Terashima Y."/>
            <person name="Suzuki O."/>
            <person name="Nakagawa S."/>
            <person name="Senoh A."/>
            <person name="Mizoguchi H."/>
            <person name="Goto Y."/>
            <person name="Shimizu F."/>
            <person name="Wakebe H."/>
            <person name="Hishigaki H."/>
            <person name="Watanabe T."/>
            <person name="Sugiyama A."/>
            <person name="Takemoto M."/>
            <person name="Kawakami B."/>
            <person name="Yamazaki M."/>
            <person name="Watanabe K."/>
            <person name="Kumagai A."/>
            <person name="Itakura S."/>
            <person name="Fukuzumi Y."/>
            <person name="Fujimori Y."/>
            <person name="Komiyama M."/>
            <person name="Tashiro H."/>
            <person name="Tanigami A."/>
            <person name="Fujiwara T."/>
            <person name="Ono T."/>
            <person name="Yamada K."/>
            <person name="Fujii Y."/>
            <person name="Ozaki K."/>
            <person name="Hirao M."/>
            <person name="Ohmori Y."/>
            <person name="Kawabata A."/>
            <person name="Hikiji T."/>
            <person name="Kobatake N."/>
            <person name="Inagaki H."/>
            <person name="Ikema Y."/>
            <person name="Okamoto S."/>
            <person name="Okitani R."/>
            <person name="Kawakami T."/>
            <person name="Noguchi S."/>
            <person name="Itoh T."/>
            <person name="Shigeta K."/>
            <person name="Senba T."/>
            <person name="Matsumura K."/>
            <person name="Nakajima Y."/>
            <person name="Mizuno T."/>
            <person name="Morinaga M."/>
            <person name="Sasaki M."/>
            <person name="Togashi T."/>
            <person name="Oyama M."/>
            <person name="Hata H."/>
            <person name="Watanabe M."/>
            <person name="Komatsu T."/>
            <person name="Mizushima-Sugano J."/>
            <person name="Satoh T."/>
            <person name="Shirai Y."/>
            <person name="Takahashi Y."/>
            <person name="Nakagawa K."/>
            <person name="Okumura K."/>
            <person name="Nagase T."/>
            <person name="Nomura N."/>
            <person name="Kikuchi H."/>
            <person name="Masuho Y."/>
            <person name="Yamashita R."/>
            <person name="Nakai K."/>
            <person name="Yada T."/>
            <person name="Nakamura Y."/>
            <person name="Ohara O."/>
            <person name="Isogai T."/>
            <person name="Sugano S."/>
        </authorList>
    </citation>
    <scope>NUCLEOTIDE SEQUENCE [LARGE SCALE MRNA]</scope>
    <source>
        <tissue>Uterus</tissue>
    </source>
</reference>
<reference key="3">
    <citation type="submission" date="2005-07" db="EMBL/GenBank/DDBJ databases">
        <authorList>
            <person name="Mural R.J."/>
            <person name="Istrail S."/>
            <person name="Sutton G.G."/>
            <person name="Florea L."/>
            <person name="Halpern A.L."/>
            <person name="Mobarry C.M."/>
            <person name="Lippert R."/>
            <person name="Walenz B."/>
            <person name="Shatkay H."/>
            <person name="Dew I."/>
            <person name="Miller J.R."/>
            <person name="Flanigan M.J."/>
            <person name="Edwards N.J."/>
            <person name="Bolanos R."/>
            <person name="Fasulo D."/>
            <person name="Halldorsson B.V."/>
            <person name="Hannenhalli S."/>
            <person name="Turner R."/>
            <person name="Yooseph S."/>
            <person name="Lu F."/>
            <person name="Nusskern D.R."/>
            <person name="Shue B.C."/>
            <person name="Zheng X.H."/>
            <person name="Zhong F."/>
            <person name="Delcher A.L."/>
            <person name="Huson D.H."/>
            <person name="Kravitz S.A."/>
            <person name="Mouchard L."/>
            <person name="Reinert K."/>
            <person name="Remington K.A."/>
            <person name="Clark A.G."/>
            <person name="Waterman M.S."/>
            <person name="Eichler E.E."/>
            <person name="Adams M.D."/>
            <person name="Hunkapiller M.W."/>
            <person name="Myers E.W."/>
            <person name="Venter J.C."/>
        </authorList>
    </citation>
    <scope>NUCLEOTIDE SEQUENCE [LARGE SCALE GENOMIC DNA]</scope>
</reference>
<reference key="4">
    <citation type="journal article" date="2004" name="Genome Res.">
        <title>The status, quality, and expansion of the NIH full-length cDNA project: the Mammalian Gene Collection (MGC).</title>
        <authorList>
            <consortium name="The MGC Project Team"/>
        </authorList>
    </citation>
    <scope>NUCLEOTIDE SEQUENCE [LARGE SCALE MRNA]</scope>
    <source>
        <tissue>Testis</tissue>
    </source>
</reference>
<gene>
    <name type="primary">ZNF431</name>
    <name type="synonym">KIAA1969</name>
</gene>
<protein>
    <recommendedName>
        <fullName>Zinc finger protein 431</fullName>
    </recommendedName>
</protein>
<comment type="function">
    <text evidence="1">Sequence-specific DNA binding transcriptional repressor. Represses target gene transcription by recruiting HDAC1 and HDAC2 histone deacetylases. Acts as a specific transcriptional repressor for PTCH1 during embryonic development. Required for osteoblast differentiation and sonic hedgehog/SHH signaling response. Binds to the consensus site 5'-GCGCCC-3' in the promoter of PTCH1 (By similarity).</text>
</comment>
<comment type="subunit">
    <text evidence="1">Interacts (via KRAB domain) with HDAC2; the interaction is direct. Interacts (via KRAB domain) with HDAC1 (By similarity).</text>
</comment>
<comment type="subcellular location">
    <subcellularLocation>
        <location evidence="1">Nucleus</location>
    </subcellularLocation>
</comment>
<comment type="domain">
    <text evidence="1">The KRAB domain is necessary for its repressive activity.</text>
</comment>
<comment type="similarity">
    <text evidence="4">Belongs to the krueppel C2H2-type zinc-finger protein family.</text>
</comment>
<comment type="sequence caution" evidence="4">
    <conflict type="erroneous initiation">
        <sequence resource="EMBL-CDS" id="BAB85555"/>
    </conflict>
</comment>
<proteinExistence type="evidence at protein level"/>
<accession>Q8TF32</accession>
<accession>A8KAK7</accession>
<accession>Q8IWC4</accession>
<feature type="chain" id="PRO_0000047579" description="Zinc finger protein 431">
    <location>
        <begin position="1"/>
        <end position="576"/>
    </location>
</feature>
<feature type="domain" description="KRAB" evidence="3">
    <location>
        <begin position="35"/>
        <end position="106"/>
    </location>
</feature>
<feature type="zinc finger region" description="C2H2-type 1; degenerate" evidence="2">
    <location>
        <begin position="176"/>
        <end position="198"/>
    </location>
</feature>
<feature type="zinc finger region" description="C2H2-type 2" evidence="2">
    <location>
        <begin position="204"/>
        <end position="226"/>
    </location>
</feature>
<feature type="zinc finger region" description="C2H2-type 3" evidence="2">
    <location>
        <begin position="232"/>
        <end position="254"/>
    </location>
</feature>
<feature type="zinc finger region" description="C2H2-type 4" evidence="2">
    <location>
        <begin position="260"/>
        <end position="282"/>
    </location>
</feature>
<feature type="zinc finger region" description="C2H2-type 5" evidence="2">
    <location>
        <begin position="288"/>
        <end position="310"/>
    </location>
</feature>
<feature type="zinc finger region" description="C2H2-type 6" evidence="2">
    <location>
        <begin position="316"/>
        <end position="338"/>
    </location>
</feature>
<feature type="zinc finger region" description="C2H2-type 7" evidence="2">
    <location>
        <begin position="344"/>
        <end position="366"/>
    </location>
</feature>
<feature type="zinc finger region" description="C2H2-type 8" evidence="2">
    <location>
        <begin position="372"/>
        <end position="394"/>
    </location>
</feature>
<feature type="zinc finger region" description="C2H2-type 9" evidence="2">
    <location>
        <begin position="400"/>
        <end position="422"/>
    </location>
</feature>
<feature type="zinc finger region" description="C2H2-type 10" evidence="2">
    <location>
        <begin position="428"/>
        <end position="450"/>
    </location>
</feature>
<feature type="zinc finger region" description="C2H2-type 11" evidence="2">
    <location>
        <begin position="456"/>
        <end position="478"/>
    </location>
</feature>
<feature type="zinc finger region" description="C2H2-type 12" evidence="2">
    <location>
        <begin position="484"/>
        <end position="506"/>
    </location>
</feature>
<feature type="zinc finger region" description="C2H2-type 13" evidence="2">
    <location>
        <begin position="512"/>
        <end position="534"/>
    </location>
</feature>
<feature type="sequence variant" id="VAR_052825" description="In dbSNP:rs17445374.">
    <original>D</original>
    <variation>G</variation>
    <location>
        <position position="3"/>
    </location>
</feature>
<feature type="sequence conflict" description="In Ref. 4; AAH40506." evidence="4" ref="4">
    <original>H</original>
    <variation>R</variation>
    <location>
        <position position="198"/>
    </location>
</feature>
<name>ZN431_HUMAN</name>
<evidence type="ECO:0000250" key="1"/>
<evidence type="ECO:0000255" key="2">
    <source>
        <dbReference type="PROSITE-ProRule" id="PRU00042"/>
    </source>
</evidence>
<evidence type="ECO:0000255" key="3">
    <source>
        <dbReference type="PROSITE-ProRule" id="PRU00119"/>
    </source>
</evidence>
<evidence type="ECO:0000305" key="4"/>
<dbReference type="EMBL" id="AB075849">
    <property type="protein sequence ID" value="BAB85555.1"/>
    <property type="status" value="ALT_INIT"/>
    <property type="molecule type" value="mRNA"/>
</dbReference>
<dbReference type="EMBL" id="AK293072">
    <property type="protein sequence ID" value="BAF85761.1"/>
    <property type="molecule type" value="mRNA"/>
</dbReference>
<dbReference type="EMBL" id="CH471106">
    <property type="protein sequence ID" value="EAW84889.1"/>
    <property type="molecule type" value="Genomic_DNA"/>
</dbReference>
<dbReference type="EMBL" id="BC040506">
    <property type="protein sequence ID" value="AAH40506.1"/>
    <property type="molecule type" value="mRNA"/>
</dbReference>
<dbReference type="CCDS" id="CCDS32979.1"/>
<dbReference type="RefSeq" id="NP_001306053.1">
    <property type="nucleotide sequence ID" value="NM_001319124.1"/>
</dbReference>
<dbReference type="RefSeq" id="NP_001306055.1">
    <property type="nucleotide sequence ID" value="NM_001319126.1"/>
</dbReference>
<dbReference type="RefSeq" id="NP_001306056.1">
    <property type="nucleotide sequence ID" value="NM_001319127.1"/>
</dbReference>
<dbReference type="RefSeq" id="NP_597730.2">
    <property type="nucleotide sequence ID" value="NM_133473.4"/>
</dbReference>
<dbReference type="SMR" id="Q8TF32"/>
<dbReference type="BioGRID" id="128094">
    <property type="interactions" value="22"/>
</dbReference>
<dbReference type="FunCoup" id="Q8TF32">
    <property type="interactions" value="155"/>
</dbReference>
<dbReference type="IntAct" id="Q8TF32">
    <property type="interactions" value="20"/>
</dbReference>
<dbReference type="MINT" id="Q8TF32"/>
<dbReference type="STRING" id="9606.ENSP00000308578"/>
<dbReference type="iPTMnet" id="Q8TF32"/>
<dbReference type="PhosphoSitePlus" id="Q8TF32"/>
<dbReference type="BioMuta" id="ZNF431"/>
<dbReference type="DMDM" id="30173456"/>
<dbReference type="jPOST" id="Q8TF32"/>
<dbReference type="MassIVE" id="Q8TF32"/>
<dbReference type="PaxDb" id="9606-ENSP00000308578"/>
<dbReference type="PeptideAtlas" id="Q8TF32"/>
<dbReference type="ProteomicsDB" id="74546"/>
<dbReference type="Antibodypedia" id="56857">
    <property type="antibodies" value="66 antibodies from 11 providers"/>
</dbReference>
<dbReference type="DNASU" id="170959"/>
<dbReference type="Ensembl" id="ENST00000311048.11">
    <property type="protein sequence ID" value="ENSP00000308578.6"/>
    <property type="gene ID" value="ENSG00000196705.8"/>
</dbReference>
<dbReference type="GeneID" id="170959"/>
<dbReference type="KEGG" id="hsa:170959"/>
<dbReference type="MANE-Select" id="ENST00000311048.11">
    <property type="protein sequence ID" value="ENSP00000308578.6"/>
    <property type="RefSeq nucleotide sequence ID" value="NM_133473.4"/>
    <property type="RefSeq protein sequence ID" value="NP_597730.2"/>
</dbReference>
<dbReference type="UCSC" id="uc002npp.3">
    <property type="organism name" value="human"/>
</dbReference>
<dbReference type="AGR" id="HGNC:20809"/>
<dbReference type="CTD" id="170959"/>
<dbReference type="DisGeNET" id="170959"/>
<dbReference type="GeneCards" id="ZNF431"/>
<dbReference type="HGNC" id="HGNC:20809">
    <property type="gene designation" value="ZNF431"/>
</dbReference>
<dbReference type="HPA" id="ENSG00000196705">
    <property type="expression patterns" value="Low tissue specificity"/>
</dbReference>
<dbReference type="MalaCards" id="ZNF431"/>
<dbReference type="MIM" id="619505">
    <property type="type" value="gene"/>
</dbReference>
<dbReference type="neXtProt" id="NX_Q8TF32"/>
<dbReference type="OpenTargets" id="ENSG00000196705"/>
<dbReference type="PharmGKB" id="PA134932493"/>
<dbReference type="VEuPathDB" id="HostDB:ENSG00000196705"/>
<dbReference type="eggNOG" id="KOG1721">
    <property type="taxonomic scope" value="Eukaryota"/>
</dbReference>
<dbReference type="GeneTree" id="ENSGT01130000278311"/>
<dbReference type="HOGENOM" id="CLU_002678_44_5_1"/>
<dbReference type="InParanoid" id="Q8TF32"/>
<dbReference type="OMA" id="NCEECDN"/>
<dbReference type="OrthoDB" id="9509747at2759"/>
<dbReference type="PAN-GO" id="Q8TF32">
    <property type="GO annotations" value="3 GO annotations based on evolutionary models"/>
</dbReference>
<dbReference type="PhylomeDB" id="Q8TF32"/>
<dbReference type="TreeFam" id="TF342117"/>
<dbReference type="PathwayCommons" id="Q8TF32"/>
<dbReference type="Reactome" id="R-HSA-212436">
    <property type="pathway name" value="Generic Transcription Pathway"/>
</dbReference>
<dbReference type="SignaLink" id="Q8TF32"/>
<dbReference type="BioGRID-ORCS" id="170959">
    <property type="hits" value="125 hits in 1115 CRISPR screens"/>
</dbReference>
<dbReference type="ChiTaRS" id="ZNF431">
    <property type="organism name" value="human"/>
</dbReference>
<dbReference type="GenomeRNAi" id="170959"/>
<dbReference type="Pharos" id="Q8TF32">
    <property type="development level" value="Tdark"/>
</dbReference>
<dbReference type="PRO" id="PR:Q8TF32"/>
<dbReference type="Proteomes" id="UP000005640">
    <property type="component" value="Chromosome 19"/>
</dbReference>
<dbReference type="RNAct" id="Q8TF32">
    <property type="molecule type" value="protein"/>
</dbReference>
<dbReference type="Bgee" id="ENSG00000196705">
    <property type="expression patterns" value="Expressed in lower esophagus mucosa and 173 other cell types or tissues"/>
</dbReference>
<dbReference type="ExpressionAtlas" id="Q8TF32">
    <property type="expression patterns" value="baseline and differential"/>
</dbReference>
<dbReference type="GO" id="GO:0005634">
    <property type="term" value="C:nucleus"/>
    <property type="evidence" value="ECO:0000250"/>
    <property type="project" value="UniProtKB"/>
</dbReference>
<dbReference type="GO" id="GO:0003682">
    <property type="term" value="F:chromatin binding"/>
    <property type="evidence" value="ECO:0000250"/>
    <property type="project" value="UniProtKB"/>
</dbReference>
<dbReference type="GO" id="GO:0000981">
    <property type="term" value="F:DNA-binding transcription factor activity, RNA polymerase II-specific"/>
    <property type="evidence" value="ECO:0000318"/>
    <property type="project" value="GO_Central"/>
</dbReference>
<dbReference type="GO" id="GO:0000978">
    <property type="term" value="F:RNA polymerase II cis-regulatory region sequence-specific DNA binding"/>
    <property type="evidence" value="ECO:0000250"/>
    <property type="project" value="UniProtKB"/>
</dbReference>
<dbReference type="GO" id="GO:0008270">
    <property type="term" value="F:zinc ion binding"/>
    <property type="evidence" value="ECO:0007669"/>
    <property type="project" value="UniProtKB-KW"/>
</dbReference>
<dbReference type="GO" id="GO:0030154">
    <property type="term" value="P:cell differentiation"/>
    <property type="evidence" value="ECO:0007669"/>
    <property type="project" value="UniProtKB-KW"/>
</dbReference>
<dbReference type="GO" id="GO:0043433">
    <property type="term" value="P:negative regulation of DNA-binding transcription factor activity"/>
    <property type="evidence" value="ECO:0000250"/>
    <property type="project" value="UniProtKB"/>
</dbReference>
<dbReference type="GO" id="GO:0000122">
    <property type="term" value="P:negative regulation of transcription by RNA polymerase II"/>
    <property type="evidence" value="ECO:0000250"/>
    <property type="project" value="UniProtKB"/>
</dbReference>
<dbReference type="GO" id="GO:0045944">
    <property type="term" value="P:positive regulation of transcription by RNA polymerase II"/>
    <property type="evidence" value="ECO:0007669"/>
    <property type="project" value="UniProtKB-ARBA"/>
</dbReference>
<dbReference type="GO" id="GO:0006355">
    <property type="term" value="P:regulation of DNA-templated transcription"/>
    <property type="evidence" value="ECO:0000318"/>
    <property type="project" value="GO_Central"/>
</dbReference>
<dbReference type="CDD" id="cd07765">
    <property type="entry name" value="KRAB_A-box"/>
    <property type="match status" value="1"/>
</dbReference>
<dbReference type="FunFam" id="3.30.160.60:FF:001737">
    <property type="entry name" value="Zinc finger protein 100"/>
    <property type="match status" value="2"/>
</dbReference>
<dbReference type="FunFam" id="3.30.160.60:FF:001868">
    <property type="entry name" value="Zinc finger protein 264"/>
    <property type="match status" value="1"/>
</dbReference>
<dbReference type="FunFam" id="3.30.160.60:FF:000120">
    <property type="entry name" value="Zinc finger protein 430"/>
    <property type="match status" value="7"/>
</dbReference>
<dbReference type="FunFam" id="3.30.160.60:FF:002448">
    <property type="entry name" value="Zinc finger protein 430"/>
    <property type="match status" value="1"/>
</dbReference>
<dbReference type="FunFam" id="3.30.160.60:FF:000362">
    <property type="entry name" value="Zinc finger protein 606"/>
    <property type="match status" value="1"/>
</dbReference>
<dbReference type="FunFam" id="3.30.160.60:FF:000176">
    <property type="entry name" value="zinc finger protein 70"/>
    <property type="match status" value="1"/>
</dbReference>
<dbReference type="Gene3D" id="6.10.140.140">
    <property type="match status" value="1"/>
</dbReference>
<dbReference type="Gene3D" id="3.30.160.60">
    <property type="entry name" value="Classic Zinc Finger"/>
    <property type="match status" value="13"/>
</dbReference>
<dbReference type="InterPro" id="IPR050329">
    <property type="entry name" value="GLI_C2H2-zinc-finger"/>
</dbReference>
<dbReference type="InterPro" id="IPR001909">
    <property type="entry name" value="KRAB"/>
</dbReference>
<dbReference type="InterPro" id="IPR036051">
    <property type="entry name" value="KRAB_dom_sf"/>
</dbReference>
<dbReference type="InterPro" id="IPR036236">
    <property type="entry name" value="Znf_C2H2_sf"/>
</dbReference>
<dbReference type="InterPro" id="IPR013087">
    <property type="entry name" value="Znf_C2H2_type"/>
</dbReference>
<dbReference type="PANTHER" id="PTHR19818:SF158">
    <property type="entry name" value="C2H2-TYPE DOMAIN-CONTAINING PROTEIN-RELATED"/>
    <property type="match status" value="1"/>
</dbReference>
<dbReference type="PANTHER" id="PTHR19818">
    <property type="entry name" value="ZINC FINGER PROTEIN ZIC AND GLI"/>
    <property type="match status" value="1"/>
</dbReference>
<dbReference type="Pfam" id="PF01352">
    <property type="entry name" value="KRAB"/>
    <property type="match status" value="1"/>
</dbReference>
<dbReference type="Pfam" id="PF00096">
    <property type="entry name" value="zf-C2H2"/>
    <property type="match status" value="9"/>
</dbReference>
<dbReference type="Pfam" id="PF13465">
    <property type="entry name" value="zf-H2C2_2"/>
    <property type="match status" value="1"/>
</dbReference>
<dbReference type="SMART" id="SM00349">
    <property type="entry name" value="KRAB"/>
    <property type="match status" value="1"/>
</dbReference>
<dbReference type="SMART" id="SM00355">
    <property type="entry name" value="ZnF_C2H2"/>
    <property type="match status" value="12"/>
</dbReference>
<dbReference type="SUPFAM" id="SSF57667">
    <property type="entry name" value="beta-beta-alpha zinc fingers"/>
    <property type="match status" value="7"/>
</dbReference>
<dbReference type="SUPFAM" id="SSF109640">
    <property type="entry name" value="KRAB domain (Kruppel-associated box)"/>
    <property type="match status" value="1"/>
</dbReference>
<dbReference type="PROSITE" id="PS50805">
    <property type="entry name" value="KRAB"/>
    <property type="match status" value="1"/>
</dbReference>
<dbReference type="PROSITE" id="PS00028">
    <property type="entry name" value="ZINC_FINGER_C2H2_1"/>
    <property type="match status" value="12"/>
</dbReference>
<dbReference type="PROSITE" id="PS50157">
    <property type="entry name" value="ZINC_FINGER_C2H2_2"/>
    <property type="match status" value="13"/>
</dbReference>